<evidence type="ECO:0000250" key="1"/>
<evidence type="ECO:0000250" key="2">
    <source>
        <dbReference type="UniProtKB" id="Q96N16"/>
    </source>
</evidence>
<evidence type="ECO:0000255" key="3"/>
<evidence type="ECO:0000256" key="4">
    <source>
        <dbReference type="SAM" id="MobiDB-lite"/>
    </source>
</evidence>
<evidence type="ECO:0000269" key="5">
    <source>
    </source>
</evidence>
<evidence type="ECO:0000269" key="6">
    <source>
    </source>
</evidence>
<evidence type="ECO:0000305" key="7"/>
<evidence type="ECO:0007744" key="8">
    <source>
    </source>
</evidence>
<reference key="1">
    <citation type="journal article" date="2005" name="Science">
        <title>The transcriptional landscape of the mammalian genome.</title>
        <authorList>
            <person name="Carninci P."/>
            <person name="Kasukawa T."/>
            <person name="Katayama S."/>
            <person name="Gough J."/>
            <person name="Frith M.C."/>
            <person name="Maeda N."/>
            <person name="Oyama R."/>
            <person name="Ravasi T."/>
            <person name="Lenhard B."/>
            <person name="Wells C."/>
            <person name="Kodzius R."/>
            <person name="Shimokawa K."/>
            <person name="Bajic V.B."/>
            <person name="Brenner S.E."/>
            <person name="Batalov S."/>
            <person name="Forrest A.R."/>
            <person name="Zavolan M."/>
            <person name="Davis M.J."/>
            <person name="Wilming L.G."/>
            <person name="Aidinis V."/>
            <person name="Allen J.E."/>
            <person name="Ambesi-Impiombato A."/>
            <person name="Apweiler R."/>
            <person name="Aturaliya R.N."/>
            <person name="Bailey T.L."/>
            <person name="Bansal M."/>
            <person name="Baxter L."/>
            <person name="Beisel K.W."/>
            <person name="Bersano T."/>
            <person name="Bono H."/>
            <person name="Chalk A.M."/>
            <person name="Chiu K.P."/>
            <person name="Choudhary V."/>
            <person name="Christoffels A."/>
            <person name="Clutterbuck D.R."/>
            <person name="Crowe M.L."/>
            <person name="Dalla E."/>
            <person name="Dalrymple B.P."/>
            <person name="de Bono B."/>
            <person name="Della Gatta G."/>
            <person name="di Bernardo D."/>
            <person name="Down T."/>
            <person name="Engstrom P."/>
            <person name="Fagiolini M."/>
            <person name="Faulkner G."/>
            <person name="Fletcher C.F."/>
            <person name="Fukushima T."/>
            <person name="Furuno M."/>
            <person name="Futaki S."/>
            <person name="Gariboldi M."/>
            <person name="Georgii-Hemming P."/>
            <person name="Gingeras T.R."/>
            <person name="Gojobori T."/>
            <person name="Green R.E."/>
            <person name="Gustincich S."/>
            <person name="Harbers M."/>
            <person name="Hayashi Y."/>
            <person name="Hensch T.K."/>
            <person name="Hirokawa N."/>
            <person name="Hill D."/>
            <person name="Huminiecki L."/>
            <person name="Iacono M."/>
            <person name="Ikeo K."/>
            <person name="Iwama A."/>
            <person name="Ishikawa T."/>
            <person name="Jakt M."/>
            <person name="Kanapin A."/>
            <person name="Katoh M."/>
            <person name="Kawasawa Y."/>
            <person name="Kelso J."/>
            <person name="Kitamura H."/>
            <person name="Kitano H."/>
            <person name="Kollias G."/>
            <person name="Krishnan S.P."/>
            <person name="Kruger A."/>
            <person name="Kummerfeld S.K."/>
            <person name="Kurochkin I.V."/>
            <person name="Lareau L.F."/>
            <person name="Lazarevic D."/>
            <person name="Lipovich L."/>
            <person name="Liu J."/>
            <person name="Liuni S."/>
            <person name="McWilliam S."/>
            <person name="Madan Babu M."/>
            <person name="Madera M."/>
            <person name="Marchionni L."/>
            <person name="Matsuda H."/>
            <person name="Matsuzawa S."/>
            <person name="Miki H."/>
            <person name="Mignone F."/>
            <person name="Miyake S."/>
            <person name="Morris K."/>
            <person name="Mottagui-Tabar S."/>
            <person name="Mulder N."/>
            <person name="Nakano N."/>
            <person name="Nakauchi H."/>
            <person name="Ng P."/>
            <person name="Nilsson R."/>
            <person name="Nishiguchi S."/>
            <person name="Nishikawa S."/>
            <person name="Nori F."/>
            <person name="Ohara O."/>
            <person name="Okazaki Y."/>
            <person name="Orlando V."/>
            <person name="Pang K.C."/>
            <person name="Pavan W.J."/>
            <person name="Pavesi G."/>
            <person name="Pesole G."/>
            <person name="Petrovsky N."/>
            <person name="Piazza S."/>
            <person name="Reed J."/>
            <person name="Reid J.F."/>
            <person name="Ring B.Z."/>
            <person name="Ringwald M."/>
            <person name="Rost B."/>
            <person name="Ruan Y."/>
            <person name="Salzberg S.L."/>
            <person name="Sandelin A."/>
            <person name="Schneider C."/>
            <person name="Schoenbach C."/>
            <person name="Sekiguchi K."/>
            <person name="Semple C.A."/>
            <person name="Seno S."/>
            <person name="Sessa L."/>
            <person name="Sheng Y."/>
            <person name="Shibata Y."/>
            <person name="Shimada H."/>
            <person name="Shimada K."/>
            <person name="Silva D."/>
            <person name="Sinclair B."/>
            <person name="Sperling S."/>
            <person name="Stupka E."/>
            <person name="Sugiura K."/>
            <person name="Sultana R."/>
            <person name="Takenaka Y."/>
            <person name="Taki K."/>
            <person name="Tammoja K."/>
            <person name="Tan S.L."/>
            <person name="Tang S."/>
            <person name="Taylor M.S."/>
            <person name="Tegner J."/>
            <person name="Teichmann S.A."/>
            <person name="Ueda H.R."/>
            <person name="van Nimwegen E."/>
            <person name="Verardo R."/>
            <person name="Wei C.L."/>
            <person name="Yagi K."/>
            <person name="Yamanishi H."/>
            <person name="Zabarovsky E."/>
            <person name="Zhu S."/>
            <person name="Zimmer A."/>
            <person name="Hide W."/>
            <person name="Bult C."/>
            <person name="Grimmond S.M."/>
            <person name="Teasdale R.D."/>
            <person name="Liu E.T."/>
            <person name="Brusic V."/>
            <person name="Quackenbush J."/>
            <person name="Wahlestedt C."/>
            <person name="Mattick J.S."/>
            <person name="Hume D.A."/>
            <person name="Kai C."/>
            <person name="Sasaki D."/>
            <person name="Tomaru Y."/>
            <person name="Fukuda S."/>
            <person name="Kanamori-Katayama M."/>
            <person name="Suzuki M."/>
            <person name="Aoki J."/>
            <person name="Arakawa T."/>
            <person name="Iida J."/>
            <person name="Imamura K."/>
            <person name="Itoh M."/>
            <person name="Kato T."/>
            <person name="Kawaji H."/>
            <person name="Kawagashira N."/>
            <person name="Kawashima T."/>
            <person name="Kojima M."/>
            <person name="Kondo S."/>
            <person name="Konno H."/>
            <person name="Nakano K."/>
            <person name="Ninomiya N."/>
            <person name="Nishio T."/>
            <person name="Okada M."/>
            <person name="Plessy C."/>
            <person name="Shibata K."/>
            <person name="Shiraki T."/>
            <person name="Suzuki S."/>
            <person name="Tagami M."/>
            <person name="Waki K."/>
            <person name="Watahiki A."/>
            <person name="Okamura-Oho Y."/>
            <person name="Suzuki H."/>
            <person name="Kawai J."/>
            <person name="Hayashizaki Y."/>
        </authorList>
    </citation>
    <scope>NUCLEOTIDE SEQUENCE [LARGE SCALE MRNA]</scope>
    <source>
        <strain>C57BL/6J</strain>
        <tissue>Intestine</tissue>
    </source>
</reference>
<reference key="2">
    <citation type="journal article" date="2004" name="Genome Res.">
        <title>The status, quality, and expansion of the NIH full-length cDNA project: the Mammalian Gene Collection (MGC).</title>
        <authorList>
            <consortium name="The MGC Project Team"/>
        </authorList>
    </citation>
    <scope>NUCLEOTIDE SEQUENCE [LARGE SCALE MRNA]</scope>
    <source>
        <tissue>Brain</tissue>
    </source>
</reference>
<reference key="3">
    <citation type="journal article" date="2004" name="J. Biol. Chem.">
        <title>Marlin-1, a novel RNA-binding protein associates with GABA receptors.</title>
        <authorList>
            <person name="Couve A."/>
            <person name="Restituito S."/>
            <person name="Brandon J.M."/>
            <person name="Charles K.J."/>
            <person name="Bawagan H."/>
            <person name="Freeman K.B."/>
            <person name="Pangalos M.N."/>
            <person name="Calver A.R."/>
            <person name="Moss S.J."/>
        </authorList>
    </citation>
    <scope>INTERACTION WITH GABBR1</scope>
</reference>
<reference key="4">
    <citation type="journal article" date="2007" name="Mol. Cell. Neurosci.">
        <title>Marlin-1 and conventional kinesin link GABAB receptors to the cytoskeleton and regulate receptor transport.</title>
        <authorList>
            <person name="Vidal R.L."/>
            <person name="Ramirez O.A."/>
            <person name="Sandoval L."/>
            <person name="Koenig-Robert R."/>
            <person name="Haertel S."/>
            <person name="Couve A."/>
        </authorList>
    </citation>
    <scope>FUNCTION</scope>
    <scope>INTERACTION WITH KIF5B</scope>
</reference>
<reference key="5">
    <citation type="journal article" date="2010" name="Cell">
        <title>A tissue-specific atlas of mouse protein phosphorylation and expression.</title>
        <authorList>
            <person name="Huttlin E.L."/>
            <person name="Jedrychowski M.P."/>
            <person name="Elias J.E."/>
            <person name="Goswami T."/>
            <person name="Rad R."/>
            <person name="Beausoleil S.A."/>
            <person name="Villen J."/>
            <person name="Haas W."/>
            <person name="Sowa M.E."/>
            <person name="Gygi S.P."/>
        </authorList>
    </citation>
    <scope>PHOSPHORYLATION [LARGE SCALE ANALYSIS] AT SER-382</scope>
    <scope>IDENTIFICATION BY MASS SPECTROMETRY [LARGE SCALE ANALYSIS]</scope>
    <source>
        <tissue>Brain</tissue>
        <tissue>Lung</tissue>
        <tissue>Spleen</tissue>
        <tissue>Testis</tissue>
    </source>
</reference>
<accession>Q8BVL9</accession>
<accession>B2RS01</accession>
<gene>
    <name type="primary">Jakmip1</name>
    <name type="synonym">Gababrbp</name>
    <name type="synonym">Marlin1</name>
</gene>
<dbReference type="EMBL" id="AK077298">
    <property type="protein sequence ID" value="BAC36736.1"/>
    <property type="molecule type" value="mRNA"/>
</dbReference>
<dbReference type="EMBL" id="BC138646">
    <property type="protein sequence ID" value="AAI38647.1"/>
    <property type="molecule type" value="mRNA"/>
</dbReference>
<dbReference type="EMBL" id="BC138649">
    <property type="protein sequence ID" value="AAI38650.1"/>
    <property type="molecule type" value="mRNA"/>
</dbReference>
<dbReference type="CCDS" id="CCDS19246.1"/>
<dbReference type="RefSeq" id="NP_848481.2">
    <property type="nucleotide sequence ID" value="NM_178394.4"/>
</dbReference>
<dbReference type="RefSeq" id="XP_017176628.1">
    <property type="nucleotide sequence ID" value="XM_017321139.3"/>
</dbReference>
<dbReference type="SMR" id="Q8BVL9"/>
<dbReference type="BioGRID" id="217944">
    <property type="interactions" value="6"/>
</dbReference>
<dbReference type="FunCoup" id="Q8BVL9">
    <property type="interactions" value="45"/>
</dbReference>
<dbReference type="IntAct" id="Q8BVL9">
    <property type="interactions" value="1"/>
</dbReference>
<dbReference type="STRING" id="10090.ENSMUSP00000038504"/>
<dbReference type="iPTMnet" id="Q8BVL9"/>
<dbReference type="PhosphoSitePlus" id="Q8BVL9"/>
<dbReference type="jPOST" id="Q8BVL9"/>
<dbReference type="PaxDb" id="10090-ENSMUSP00000038504"/>
<dbReference type="ProteomicsDB" id="269121"/>
<dbReference type="Antibodypedia" id="22639">
    <property type="antibodies" value="166 antibodies from 27 providers"/>
</dbReference>
<dbReference type="Ensembl" id="ENSMUST00000043794.11">
    <property type="protein sequence ID" value="ENSMUSP00000038504.5"/>
    <property type="gene ID" value="ENSMUSG00000063646.19"/>
</dbReference>
<dbReference type="GeneID" id="76071"/>
<dbReference type="KEGG" id="mmu:76071"/>
<dbReference type="UCSC" id="uc008xfh.1">
    <property type="organism name" value="mouse"/>
</dbReference>
<dbReference type="AGR" id="MGI:1923321"/>
<dbReference type="CTD" id="152789"/>
<dbReference type="MGI" id="MGI:1923321">
    <property type="gene designation" value="Jakmip1"/>
</dbReference>
<dbReference type="VEuPathDB" id="HostDB:ENSMUSG00000063646"/>
<dbReference type="eggNOG" id="ENOG502QS6X">
    <property type="taxonomic scope" value="Eukaryota"/>
</dbReference>
<dbReference type="GeneTree" id="ENSGT00940000153713"/>
<dbReference type="HOGENOM" id="CLU_020294_2_0_1"/>
<dbReference type="InParanoid" id="Q8BVL9"/>
<dbReference type="TreeFam" id="TF331900"/>
<dbReference type="BioGRID-ORCS" id="76071">
    <property type="hits" value="5 hits in 78 CRISPR screens"/>
</dbReference>
<dbReference type="CD-CODE" id="CE726F99">
    <property type="entry name" value="Postsynaptic density"/>
</dbReference>
<dbReference type="ChiTaRS" id="Jakmip1">
    <property type="organism name" value="mouse"/>
</dbReference>
<dbReference type="PRO" id="PR:Q8BVL9"/>
<dbReference type="Proteomes" id="UP000000589">
    <property type="component" value="Chromosome 5"/>
</dbReference>
<dbReference type="RNAct" id="Q8BVL9">
    <property type="molecule type" value="protein"/>
</dbReference>
<dbReference type="Bgee" id="ENSMUSG00000063646">
    <property type="expression patterns" value="Expressed in olfactory epithelium and 163 other cell types or tissues"/>
</dbReference>
<dbReference type="ExpressionAtlas" id="Q8BVL9">
    <property type="expression patterns" value="baseline and differential"/>
</dbReference>
<dbReference type="GO" id="GO:0005737">
    <property type="term" value="C:cytoplasm"/>
    <property type="evidence" value="ECO:0007669"/>
    <property type="project" value="UniProtKB-KW"/>
</dbReference>
<dbReference type="GO" id="GO:0016020">
    <property type="term" value="C:membrane"/>
    <property type="evidence" value="ECO:0000266"/>
    <property type="project" value="MGI"/>
</dbReference>
<dbReference type="GO" id="GO:0005874">
    <property type="term" value="C:microtubule"/>
    <property type="evidence" value="ECO:0007669"/>
    <property type="project" value="UniProtKB-KW"/>
</dbReference>
<dbReference type="GO" id="GO:0015630">
    <property type="term" value="C:microtubule cytoskeleton"/>
    <property type="evidence" value="ECO:0000266"/>
    <property type="project" value="MGI"/>
</dbReference>
<dbReference type="GO" id="GO:1990904">
    <property type="term" value="C:ribonucleoprotein complex"/>
    <property type="evidence" value="ECO:0000266"/>
    <property type="project" value="MGI"/>
</dbReference>
<dbReference type="GO" id="GO:0050811">
    <property type="term" value="F:GABA receptor binding"/>
    <property type="evidence" value="ECO:0000266"/>
    <property type="project" value="MGI"/>
</dbReference>
<dbReference type="GO" id="GO:0019900">
    <property type="term" value="F:kinase binding"/>
    <property type="evidence" value="ECO:0007669"/>
    <property type="project" value="InterPro"/>
</dbReference>
<dbReference type="GO" id="GO:0019894">
    <property type="term" value="F:kinesin binding"/>
    <property type="evidence" value="ECO:0000353"/>
    <property type="project" value="MGI"/>
</dbReference>
<dbReference type="GO" id="GO:0008017">
    <property type="term" value="F:microtubule binding"/>
    <property type="evidence" value="ECO:0007669"/>
    <property type="project" value="InterPro"/>
</dbReference>
<dbReference type="GO" id="GO:0003723">
    <property type="term" value="F:RNA binding"/>
    <property type="evidence" value="ECO:0000266"/>
    <property type="project" value="MGI"/>
</dbReference>
<dbReference type="GO" id="GO:0015031">
    <property type="term" value="P:protein transport"/>
    <property type="evidence" value="ECO:0007669"/>
    <property type="project" value="UniProtKB-KW"/>
</dbReference>
<dbReference type="InterPro" id="IPR024836">
    <property type="entry name" value="JAKMIP"/>
</dbReference>
<dbReference type="InterPro" id="IPR031994">
    <property type="entry name" value="JAKMIP_C"/>
</dbReference>
<dbReference type="PANTHER" id="PTHR18935">
    <property type="entry name" value="GOLGIN SUBFAMILY A MEMBER 4-LIKE ISOFORM X1"/>
    <property type="match status" value="1"/>
</dbReference>
<dbReference type="PANTHER" id="PTHR18935:SF6">
    <property type="entry name" value="JANUS KINASE AND MICROTUBULE-INTERACTING PROTEIN 1"/>
    <property type="match status" value="1"/>
</dbReference>
<dbReference type="Pfam" id="PF16034">
    <property type="entry name" value="JAKMIP_CC3"/>
    <property type="match status" value="1"/>
</dbReference>
<name>JKIP1_MOUSE</name>
<keyword id="KW-0175">Coiled coil</keyword>
<keyword id="KW-0963">Cytoplasm</keyword>
<keyword id="KW-0206">Cytoskeleton</keyword>
<keyword id="KW-0472">Membrane</keyword>
<keyword id="KW-0493">Microtubule</keyword>
<keyword id="KW-0597">Phosphoprotein</keyword>
<keyword id="KW-0653">Protein transport</keyword>
<keyword id="KW-1185">Reference proteome</keyword>
<keyword id="KW-0813">Transport</keyword>
<protein>
    <recommendedName>
        <fullName>Janus kinase and microtubule-interacting protein 1</fullName>
    </recommendedName>
    <alternativeName>
        <fullName>GABA-B receptor-binding protein</fullName>
    </alternativeName>
    <alternativeName>
        <fullName>Multiple alpha-helices and RNA-linker protein 1</fullName>
        <shortName>Marlin-1</shortName>
    </alternativeName>
</protein>
<comment type="function">
    <text evidence="6">Associates with microtubules and may play a role in the microtubule-dependent transport of the GABA-B receptor. May play a role in JAK1 signaling and regulate microtubule cytoskeleton rearrangements.</text>
</comment>
<comment type="subunit">
    <text evidence="1 5 6">Homodimer (By similarity). Interacts with JAK1 and TYK2 (By similarity). Forms a complex with GABBR1 and KIF5B/kinesin-1.</text>
</comment>
<comment type="subcellular location">
    <subcellularLocation>
        <location evidence="1">Cytoplasm</location>
        <location evidence="1">Cytoskeleton</location>
    </subcellularLocation>
    <subcellularLocation>
        <location evidence="1">Membrane</location>
        <topology evidence="1">Peripheral membrane protein</topology>
    </subcellularLocation>
    <text evidence="1">Colocalizes with the microtubule network. Localizes to the cell body and neurites of hippocampal neurons where it accumulates in granules. Localizes to the tail and to a lower extent to the head of sperm cells (By similarity).</text>
</comment>
<comment type="PTM">
    <text evidence="1">Phosphorylated.</text>
</comment>
<comment type="similarity">
    <text evidence="7">Belongs to the JAKMIP family.</text>
</comment>
<sequence>MSKKGRSKGDKPEAETDSVQMANEELRAKLTNIQIEFQQEKSKVGKLRERLQEAKLEREQEQRRHTAYISELKAKLHEEKTKELQALREALIRQHEQEAARTAKIKEGELQRLQATLNVLRDGAADKVKTALLADAREEARRTFDGERQRLQQEILELKAARKQAEEALSNCMQADKAKAADLRAAYQAHQDEVHRIKRECERDIRRLMDEIKGKERVILALEKELGVQTGQTQRLLLQKEALDEQLVQVKEAERHHSSPKRELPPGIGDMAELMGGQDQHMDERDVRRFQLKIAELNSVIRKLEDRNTLLADERNELLKRSRETEVQLKPLVEKNKRMNKKNEELLHSIQRMEEKLKSLTRENVEMKEKLSAQASLKRHTSLNDLSLTRDEQEIEFLRLQVLEQQHVIDDLSLERERLLRSKRHRGKSLKPPKKHVVETFFGFDEESVDSETLSETSYNTDRTDRTPATPEEDLDETTTREEADLRFCQLTREYQALQRAYALLQEQVGGTLDAEREARTREQLQADLLRCQAKIEDLEKLLVEKGQDAAWVEEKQVLMRTNQDLLEKIYRLEMEENQLKSEMQDAKDQNELLEFRVLELEVRDSICCKLSNGADILFEPKLKFM</sequence>
<feature type="chain" id="PRO_0000323009" description="Janus kinase and microtubule-interacting protein 1">
    <location>
        <begin position="1"/>
        <end position="626"/>
    </location>
</feature>
<feature type="region of interest" description="Mediates association with microtubules" evidence="1">
    <location>
        <begin position="1"/>
        <end position="365"/>
    </location>
</feature>
<feature type="region of interest" description="Disordered" evidence="4">
    <location>
        <begin position="1"/>
        <end position="25"/>
    </location>
</feature>
<feature type="region of interest" description="Mediates interaction with TYK2 and GABBR1" evidence="1">
    <location>
        <begin position="365"/>
        <end position="626"/>
    </location>
</feature>
<feature type="region of interest" description="Disordered" evidence="4">
    <location>
        <begin position="452"/>
        <end position="481"/>
    </location>
</feature>
<feature type="coiled-coil region" evidence="3">
    <location>
        <begin position="13"/>
        <end position="255"/>
    </location>
</feature>
<feature type="coiled-coil region" evidence="3">
    <location>
        <begin position="284"/>
        <end position="413"/>
    </location>
</feature>
<feature type="coiled-coil region" evidence="3">
    <location>
        <begin position="490"/>
        <end position="604"/>
    </location>
</feature>
<feature type="compositionally biased region" description="Polar residues" evidence="4">
    <location>
        <begin position="452"/>
        <end position="461"/>
    </location>
</feature>
<feature type="modified residue" description="Phosphoserine" evidence="8">
    <location>
        <position position="382"/>
    </location>
</feature>
<feature type="modified residue" description="Phosphothreonine" evidence="2">
    <location>
        <position position="470"/>
    </location>
</feature>
<feature type="sequence conflict" description="In Ref. 1; BAC36736." evidence="7" ref="1">
    <original>R</original>
    <variation>G</variation>
    <location>
        <position position="207"/>
    </location>
</feature>
<organism>
    <name type="scientific">Mus musculus</name>
    <name type="common">Mouse</name>
    <dbReference type="NCBI Taxonomy" id="10090"/>
    <lineage>
        <taxon>Eukaryota</taxon>
        <taxon>Metazoa</taxon>
        <taxon>Chordata</taxon>
        <taxon>Craniata</taxon>
        <taxon>Vertebrata</taxon>
        <taxon>Euteleostomi</taxon>
        <taxon>Mammalia</taxon>
        <taxon>Eutheria</taxon>
        <taxon>Euarchontoglires</taxon>
        <taxon>Glires</taxon>
        <taxon>Rodentia</taxon>
        <taxon>Myomorpha</taxon>
        <taxon>Muroidea</taxon>
        <taxon>Muridae</taxon>
        <taxon>Murinae</taxon>
        <taxon>Mus</taxon>
        <taxon>Mus</taxon>
    </lineage>
</organism>
<proteinExistence type="evidence at protein level"/>